<proteinExistence type="inferred from homology"/>
<reference key="1">
    <citation type="journal article" date="2005" name="Proc. Natl. Acad. Sci. U.S.A.">
        <title>Genome analysis of multiple pathogenic isolates of Streptococcus agalactiae: implications for the microbial 'pan-genome'.</title>
        <authorList>
            <person name="Tettelin H."/>
            <person name="Masignani V."/>
            <person name="Cieslewicz M.J."/>
            <person name="Donati C."/>
            <person name="Medini D."/>
            <person name="Ward N.L."/>
            <person name="Angiuoli S.V."/>
            <person name="Crabtree J."/>
            <person name="Jones A.L."/>
            <person name="Durkin A.S."/>
            <person name="DeBoy R.T."/>
            <person name="Davidsen T.M."/>
            <person name="Mora M."/>
            <person name="Scarselli M."/>
            <person name="Margarit y Ros I."/>
            <person name="Peterson J.D."/>
            <person name="Hauser C.R."/>
            <person name="Sundaram J.P."/>
            <person name="Nelson W.C."/>
            <person name="Madupu R."/>
            <person name="Brinkac L.M."/>
            <person name="Dodson R.J."/>
            <person name="Rosovitz M.J."/>
            <person name="Sullivan S.A."/>
            <person name="Daugherty S.C."/>
            <person name="Haft D.H."/>
            <person name="Selengut J."/>
            <person name="Gwinn M.L."/>
            <person name="Zhou L."/>
            <person name="Zafar N."/>
            <person name="Khouri H."/>
            <person name="Radune D."/>
            <person name="Dimitrov G."/>
            <person name="Watkins K."/>
            <person name="O'Connor K.J."/>
            <person name="Smith S."/>
            <person name="Utterback T.R."/>
            <person name="White O."/>
            <person name="Rubens C.E."/>
            <person name="Grandi G."/>
            <person name="Madoff L.C."/>
            <person name="Kasper D.L."/>
            <person name="Telford J.L."/>
            <person name="Wessels M.R."/>
            <person name="Rappuoli R."/>
            <person name="Fraser C.M."/>
        </authorList>
    </citation>
    <scope>NUCLEOTIDE SEQUENCE [LARGE SCALE GENOMIC DNA]</scope>
    <source>
        <strain>ATCC 27591 / A909 / CDC SS700</strain>
    </source>
</reference>
<protein>
    <recommendedName>
        <fullName evidence="1">Holo-[acyl-carrier-protein] synthase</fullName>
        <shortName evidence="1">Holo-ACP synthase</shortName>
        <ecNumber evidence="1">2.7.8.7</ecNumber>
    </recommendedName>
    <alternativeName>
        <fullName evidence="1">4'-phosphopantetheinyl transferase AcpS</fullName>
    </alternativeName>
</protein>
<accession>Q3JZK4</accession>
<name>ACPS_STRA1</name>
<gene>
    <name evidence="1" type="primary">acpS</name>
    <name type="ordered locus">SAK_1697</name>
</gene>
<keyword id="KW-0963">Cytoplasm</keyword>
<keyword id="KW-0275">Fatty acid biosynthesis</keyword>
<keyword id="KW-0276">Fatty acid metabolism</keyword>
<keyword id="KW-0444">Lipid biosynthesis</keyword>
<keyword id="KW-0443">Lipid metabolism</keyword>
<keyword id="KW-0460">Magnesium</keyword>
<keyword id="KW-0479">Metal-binding</keyword>
<keyword id="KW-0808">Transferase</keyword>
<sequence>MIVGHGIDLQEIEAITKAYERNQRFAERVLTEQELLLFKGISNPKRQMSFLTGRWAAKEAYSKALGTGIGKVNFHDIEILSDDKGAPLITKEPFNGKSFVSISHSGNYAQASVILEEEK</sequence>
<dbReference type="EC" id="2.7.8.7" evidence="1"/>
<dbReference type="EMBL" id="CP000114">
    <property type="protein sequence ID" value="ABA45073.1"/>
    <property type="molecule type" value="Genomic_DNA"/>
</dbReference>
<dbReference type="RefSeq" id="WP_000635015.1">
    <property type="nucleotide sequence ID" value="NC_007432.1"/>
</dbReference>
<dbReference type="SMR" id="Q3JZK4"/>
<dbReference type="GeneID" id="66886531"/>
<dbReference type="KEGG" id="sak:SAK_1697"/>
<dbReference type="HOGENOM" id="CLU_089696_1_2_9"/>
<dbReference type="GO" id="GO:0005737">
    <property type="term" value="C:cytoplasm"/>
    <property type="evidence" value="ECO:0007669"/>
    <property type="project" value="UniProtKB-SubCell"/>
</dbReference>
<dbReference type="GO" id="GO:0008897">
    <property type="term" value="F:holo-[acyl-carrier-protein] synthase activity"/>
    <property type="evidence" value="ECO:0007669"/>
    <property type="project" value="UniProtKB-UniRule"/>
</dbReference>
<dbReference type="GO" id="GO:0000287">
    <property type="term" value="F:magnesium ion binding"/>
    <property type="evidence" value="ECO:0007669"/>
    <property type="project" value="UniProtKB-UniRule"/>
</dbReference>
<dbReference type="GO" id="GO:0006633">
    <property type="term" value="P:fatty acid biosynthetic process"/>
    <property type="evidence" value="ECO:0007669"/>
    <property type="project" value="UniProtKB-UniRule"/>
</dbReference>
<dbReference type="Gene3D" id="3.90.470.20">
    <property type="entry name" value="4'-phosphopantetheinyl transferase domain"/>
    <property type="match status" value="1"/>
</dbReference>
<dbReference type="HAMAP" id="MF_00101">
    <property type="entry name" value="AcpS"/>
    <property type="match status" value="1"/>
</dbReference>
<dbReference type="InterPro" id="IPR008278">
    <property type="entry name" value="4-PPantetheinyl_Trfase_dom"/>
</dbReference>
<dbReference type="InterPro" id="IPR037143">
    <property type="entry name" value="4-PPantetheinyl_Trfase_dom_sf"/>
</dbReference>
<dbReference type="InterPro" id="IPR002582">
    <property type="entry name" value="ACPS"/>
</dbReference>
<dbReference type="InterPro" id="IPR004568">
    <property type="entry name" value="Ppantetheine-prot_Trfase_dom"/>
</dbReference>
<dbReference type="NCBIfam" id="TIGR00516">
    <property type="entry name" value="acpS"/>
    <property type="match status" value="1"/>
</dbReference>
<dbReference type="NCBIfam" id="TIGR00556">
    <property type="entry name" value="pantethn_trn"/>
    <property type="match status" value="1"/>
</dbReference>
<dbReference type="Pfam" id="PF01648">
    <property type="entry name" value="ACPS"/>
    <property type="match status" value="1"/>
</dbReference>
<dbReference type="SUPFAM" id="SSF56214">
    <property type="entry name" value="4'-phosphopantetheinyl transferase"/>
    <property type="match status" value="1"/>
</dbReference>
<comment type="function">
    <text evidence="1">Transfers the 4'-phosphopantetheine moiety from coenzyme A to a Ser of acyl-carrier-protein.</text>
</comment>
<comment type="catalytic activity">
    <reaction evidence="1">
        <text>apo-[ACP] + CoA = holo-[ACP] + adenosine 3',5'-bisphosphate + H(+)</text>
        <dbReference type="Rhea" id="RHEA:12068"/>
        <dbReference type="Rhea" id="RHEA-COMP:9685"/>
        <dbReference type="Rhea" id="RHEA-COMP:9690"/>
        <dbReference type="ChEBI" id="CHEBI:15378"/>
        <dbReference type="ChEBI" id="CHEBI:29999"/>
        <dbReference type="ChEBI" id="CHEBI:57287"/>
        <dbReference type="ChEBI" id="CHEBI:58343"/>
        <dbReference type="ChEBI" id="CHEBI:64479"/>
        <dbReference type="EC" id="2.7.8.7"/>
    </reaction>
</comment>
<comment type="cofactor">
    <cofactor evidence="1">
        <name>Mg(2+)</name>
        <dbReference type="ChEBI" id="CHEBI:18420"/>
    </cofactor>
</comment>
<comment type="subcellular location">
    <subcellularLocation>
        <location evidence="1">Cytoplasm</location>
    </subcellularLocation>
</comment>
<comment type="similarity">
    <text evidence="1">Belongs to the P-Pant transferase superfamily. AcpS family.</text>
</comment>
<feature type="chain" id="PRO_0000228310" description="Holo-[acyl-carrier-protein] synthase">
    <location>
        <begin position="1"/>
        <end position="119"/>
    </location>
</feature>
<feature type="binding site" evidence="1">
    <location>
        <position position="8"/>
    </location>
    <ligand>
        <name>Mg(2+)</name>
        <dbReference type="ChEBI" id="CHEBI:18420"/>
    </ligand>
</feature>
<feature type="binding site" evidence="1">
    <location>
        <position position="59"/>
    </location>
    <ligand>
        <name>Mg(2+)</name>
        <dbReference type="ChEBI" id="CHEBI:18420"/>
    </ligand>
</feature>
<organism>
    <name type="scientific">Streptococcus agalactiae serotype Ia (strain ATCC 27591 / A909 / CDC SS700)</name>
    <dbReference type="NCBI Taxonomy" id="205921"/>
    <lineage>
        <taxon>Bacteria</taxon>
        <taxon>Bacillati</taxon>
        <taxon>Bacillota</taxon>
        <taxon>Bacilli</taxon>
        <taxon>Lactobacillales</taxon>
        <taxon>Streptococcaceae</taxon>
        <taxon>Streptococcus</taxon>
    </lineage>
</organism>
<evidence type="ECO:0000255" key="1">
    <source>
        <dbReference type="HAMAP-Rule" id="MF_00101"/>
    </source>
</evidence>